<proteinExistence type="inferred from homology"/>
<gene>
    <name evidence="2" type="primary">infB</name>
    <name type="ordered locus">BAB1_2165</name>
</gene>
<name>IF2_BRUA2</name>
<accession>Q2YQR7</accession>
<feature type="chain" id="PRO_0000228176" description="Translation initiation factor IF-2">
    <location>
        <begin position="1"/>
        <end position="959"/>
    </location>
</feature>
<feature type="domain" description="tr-type G">
    <location>
        <begin position="457"/>
        <end position="626"/>
    </location>
</feature>
<feature type="region of interest" description="Disordered" evidence="3">
    <location>
        <begin position="1"/>
        <end position="374"/>
    </location>
</feature>
<feature type="region of interest" description="G1" evidence="1">
    <location>
        <begin position="466"/>
        <end position="473"/>
    </location>
</feature>
<feature type="region of interest" description="G2" evidence="1">
    <location>
        <begin position="491"/>
        <end position="495"/>
    </location>
</feature>
<feature type="region of interest" description="G3" evidence="1">
    <location>
        <begin position="512"/>
        <end position="515"/>
    </location>
</feature>
<feature type="region of interest" description="G4" evidence="1">
    <location>
        <begin position="566"/>
        <end position="569"/>
    </location>
</feature>
<feature type="region of interest" description="G5" evidence="1">
    <location>
        <begin position="602"/>
        <end position="604"/>
    </location>
</feature>
<feature type="compositionally biased region" description="Basic and acidic residues" evidence="3">
    <location>
        <begin position="1"/>
        <end position="10"/>
    </location>
</feature>
<feature type="compositionally biased region" description="Polar residues" evidence="3">
    <location>
        <begin position="27"/>
        <end position="37"/>
    </location>
</feature>
<feature type="compositionally biased region" description="Low complexity" evidence="3">
    <location>
        <begin position="63"/>
        <end position="118"/>
    </location>
</feature>
<feature type="compositionally biased region" description="Low complexity" evidence="3">
    <location>
        <begin position="128"/>
        <end position="138"/>
    </location>
</feature>
<feature type="compositionally biased region" description="Basic and acidic residues" evidence="3">
    <location>
        <begin position="154"/>
        <end position="225"/>
    </location>
</feature>
<feature type="compositionally biased region" description="Basic and acidic residues" evidence="3">
    <location>
        <begin position="232"/>
        <end position="241"/>
    </location>
</feature>
<feature type="compositionally biased region" description="Low complexity" evidence="3">
    <location>
        <begin position="246"/>
        <end position="284"/>
    </location>
</feature>
<feature type="compositionally biased region" description="Basic and acidic residues" evidence="3">
    <location>
        <begin position="318"/>
        <end position="333"/>
    </location>
</feature>
<feature type="binding site" evidence="2">
    <location>
        <begin position="466"/>
        <end position="473"/>
    </location>
    <ligand>
        <name>GTP</name>
        <dbReference type="ChEBI" id="CHEBI:37565"/>
    </ligand>
</feature>
<feature type="binding site" evidence="2">
    <location>
        <begin position="512"/>
        <end position="516"/>
    </location>
    <ligand>
        <name>GTP</name>
        <dbReference type="ChEBI" id="CHEBI:37565"/>
    </ligand>
</feature>
<feature type="binding site" evidence="2">
    <location>
        <begin position="566"/>
        <end position="569"/>
    </location>
    <ligand>
        <name>GTP</name>
        <dbReference type="ChEBI" id="CHEBI:37565"/>
    </ligand>
</feature>
<organism>
    <name type="scientific">Brucella abortus (strain 2308)</name>
    <dbReference type="NCBI Taxonomy" id="359391"/>
    <lineage>
        <taxon>Bacteria</taxon>
        <taxon>Pseudomonadati</taxon>
        <taxon>Pseudomonadota</taxon>
        <taxon>Alphaproteobacteria</taxon>
        <taxon>Hyphomicrobiales</taxon>
        <taxon>Brucellaceae</taxon>
        <taxon>Brucella/Ochrobactrum group</taxon>
        <taxon>Brucella</taxon>
    </lineage>
</organism>
<evidence type="ECO:0000250" key="1"/>
<evidence type="ECO:0000255" key="2">
    <source>
        <dbReference type="HAMAP-Rule" id="MF_00100"/>
    </source>
</evidence>
<evidence type="ECO:0000256" key="3">
    <source>
        <dbReference type="SAM" id="MobiDB-lite"/>
    </source>
</evidence>
<protein>
    <recommendedName>
        <fullName evidence="2">Translation initiation factor IF-2</fullName>
    </recommendedName>
</protein>
<comment type="function">
    <text evidence="2">One of the essential components for the initiation of protein synthesis. Protects formylmethionyl-tRNA from spontaneous hydrolysis and promotes its binding to the 30S ribosomal subunits. Also involved in the hydrolysis of GTP during the formation of the 70S ribosomal complex.</text>
</comment>
<comment type="subcellular location">
    <subcellularLocation>
        <location evidence="2">Cytoplasm</location>
    </subcellularLocation>
</comment>
<comment type="similarity">
    <text evidence="2">Belongs to the TRAFAC class translation factor GTPase superfamily. Classic translation factor GTPase family. IF-2 subfamily.</text>
</comment>
<reference key="1">
    <citation type="journal article" date="2005" name="Infect. Immun.">
        <title>Whole-genome analyses of speciation events in pathogenic Brucellae.</title>
        <authorList>
            <person name="Chain P.S."/>
            <person name="Comerci D.J."/>
            <person name="Tolmasky M.E."/>
            <person name="Larimer F.W."/>
            <person name="Malfatti S.A."/>
            <person name="Vergez L.M."/>
            <person name="Aguero F."/>
            <person name="Land M.L."/>
            <person name="Ugalde R.A."/>
            <person name="Garcia E."/>
        </authorList>
    </citation>
    <scope>NUCLEOTIDE SEQUENCE [LARGE SCALE GENOMIC DNA]</scope>
    <source>
        <strain>2308</strain>
    </source>
</reference>
<sequence length="959" mass="104141">MSDKTNDDKTLSVNPKKTLTLKRPGVEQSTVRQNFSHGRTKAVVVETKKRKFSRPDEKPEVEAAAAPKPAAPAAAPQQAPASAPVSASAAQASAPQPAPVKAPATKAPAAPSAPVTKPHVAQQRPVHQRPGGQQAQRPRPADRSGMVLNTLSRSEMDARRRALEEAQIREVEERARAVEEAKRRAEEDARRAKEREESARRQAEEEARLKAEAEARRKAEEEAAKRMPQPEARSERRDDARPAPYGARPQQAGRPQGGRPQPAGRPQQGSPRPAPIIADAAPIAGKPLPQSQLRKPGQSDDDDDRRSGAARRGVAAKPEVRAPKVVKGEDDRRRGKLTLTSNLEEEGRSRSLSAMRRRQEKFKRSQMQETREKISREVTIPETITLQELAQRMAERSVDIIKYLMKQGQMMKPGDVIDADTAQLIAEEFGHTVKRVAESDVEEGIFDVADNESAMVSRPPVVTIMGHVDHGKTSLLDAIRHANVVSGEAGGITQHIGAYQVVQNGQKITFIDTPGHAAFTAMRARGAQATDIAILVVAADDSVMPQTIESINHAKAAGVPIIVAINKIDKPAADPQKVRTALLQHEVFVESMGGEVLDVEVSAKNKINLDKLLDAVLLQAEMLDLKADPDRTAEGVVIEAQLDRGRGSVATVLIQKGTLHPGDILVAGSEWGRVRALVNDRGEHVKEAGPAMPVEILGLQGTPQAGDRFAVVANEAKAREIAEYRQRLARDKAVARQSGARGSLEQMMNQLQVSGTKEFPLVIKGDVQGSIEAITNALDKLGTDEVRARIVHSGAGGITESDVSLAEASNAAIIGFNVRANKQARDSAEQQGIEIRYYNIIYDLIDDVKAAMSGLLSPERRETFLGNAEILEVFNITKVGKVAGCRVTEGKVERGAGVRLIRDNVVIHEGKLKTLKRFKDEVAEVPSGQECGMAFENYDDIRAGDVIEAFRVEHVSRTL</sequence>
<keyword id="KW-0963">Cytoplasm</keyword>
<keyword id="KW-0342">GTP-binding</keyword>
<keyword id="KW-0396">Initiation factor</keyword>
<keyword id="KW-0547">Nucleotide-binding</keyword>
<keyword id="KW-0648">Protein biosynthesis</keyword>
<keyword id="KW-1185">Reference proteome</keyword>
<dbReference type="EMBL" id="AM040264">
    <property type="protein sequence ID" value="CAJ12121.1"/>
    <property type="molecule type" value="Genomic_DNA"/>
</dbReference>
<dbReference type="RefSeq" id="WP_002965227.1">
    <property type="nucleotide sequence ID" value="NZ_KN046823.1"/>
</dbReference>
<dbReference type="SMR" id="Q2YQR7"/>
<dbReference type="STRING" id="359391.BAB1_2165"/>
<dbReference type="GeneID" id="93017533"/>
<dbReference type="KEGG" id="bmf:BAB1_2165"/>
<dbReference type="PATRIC" id="fig|359391.11.peg.1402"/>
<dbReference type="HOGENOM" id="CLU_006301_10_0_5"/>
<dbReference type="PhylomeDB" id="Q2YQR7"/>
<dbReference type="Proteomes" id="UP000002719">
    <property type="component" value="Chromosome I"/>
</dbReference>
<dbReference type="GO" id="GO:0005829">
    <property type="term" value="C:cytosol"/>
    <property type="evidence" value="ECO:0007669"/>
    <property type="project" value="TreeGrafter"/>
</dbReference>
<dbReference type="GO" id="GO:0005525">
    <property type="term" value="F:GTP binding"/>
    <property type="evidence" value="ECO:0007669"/>
    <property type="project" value="UniProtKB-KW"/>
</dbReference>
<dbReference type="GO" id="GO:0003924">
    <property type="term" value="F:GTPase activity"/>
    <property type="evidence" value="ECO:0007669"/>
    <property type="project" value="UniProtKB-UniRule"/>
</dbReference>
<dbReference type="GO" id="GO:0097216">
    <property type="term" value="F:guanosine tetraphosphate binding"/>
    <property type="evidence" value="ECO:0007669"/>
    <property type="project" value="UniProtKB-ARBA"/>
</dbReference>
<dbReference type="GO" id="GO:0003743">
    <property type="term" value="F:translation initiation factor activity"/>
    <property type="evidence" value="ECO:0007669"/>
    <property type="project" value="UniProtKB-UniRule"/>
</dbReference>
<dbReference type="CDD" id="cd01887">
    <property type="entry name" value="IF2_eIF5B"/>
    <property type="match status" value="1"/>
</dbReference>
<dbReference type="CDD" id="cd03702">
    <property type="entry name" value="IF2_mtIF2_II"/>
    <property type="match status" value="1"/>
</dbReference>
<dbReference type="CDD" id="cd03692">
    <property type="entry name" value="mtIF2_IVc"/>
    <property type="match status" value="1"/>
</dbReference>
<dbReference type="CDD" id="cd22265">
    <property type="entry name" value="UDM1_RNF168"/>
    <property type="match status" value="1"/>
</dbReference>
<dbReference type="FunFam" id="2.40.30.10:FF:000007">
    <property type="entry name" value="Translation initiation factor IF-2"/>
    <property type="match status" value="1"/>
</dbReference>
<dbReference type="FunFam" id="2.40.30.10:FF:000008">
    <property type="entry name" value="Translation initiation factor IF-2"/>
    <property type="match status" value="1"/>
</dbReference>
<dbReference type="FunFam" id="3.40.50.10050:FF:000001">
    <property type="entry name" value="Translation initiation factor IF-2"/>
    <property type="match status" value="1"/>
</dbReference>
<dbReference type="FunFam" id="3.40.50.300:FF:000019">
    <property type="entry name" value="Translation initiation factor IF-2"/>
    <property type="match status" value="1"/>
</dbReference>
<dbReference type="Gene3D" id="3.40.50.300">
    <property type="entry name" value="P-loop containing nucleotide triphosphate hydrolases"/>
    <property type="match status" value="1"/>
</dbReference>
<dbReference type="Gene3D" id="2.40.30.10">
    <property type="entry name" value="Translation factors"/>
    <property type="match status" value="2"/>
</dbReference>
<dbReference type="Gene3D" id="3.40.50.10050">
    <property type="entry name" value="Translation initiation factor IF- 2, domain 3"/>
    <property type="match status" value="1"/>
</dbReference>
<dbReference type="HAMAP" id="MF_00100_B">
    <property type="entry name" value="IF_2_B"/>
    <property type="match status" value="1"/>
</dbReference>
<dbReference type="InterPro" id="IPR053905">
    <property type="entry name" value="EF-G-like_DII"/>
</dbReference>
<dbReference type="InterPro" id="IPR004161">
    <property type="entry name" value="EFTu-like_2"/>
</dbReference>
<dbReference type="InterPro" id="IPR013575">
    <property type="entry name" value="IF2_assoc_dom_bac"/>
</dbReference>
<dbReference type="InterPro" id="IPR044145">
    <property type="entry name" value="IF2_II"/>
</dbReference>
<dbReference type="InterPro" id="IPR006847">
    <property type="entry name" value="IF2_N"/>
</dbReference>
<dbReference type="InterPro" id="IPR027417">
    <property type="entry name" value="P-loop_NTPase"/>
</dbReference>
<dbReference type="InterPro" id="IPR005225">
    <property type="entry name" value="Small_GTP-bd"/>
</dbReference>
<dbReference type="InterPro" id="IPR000795">
    <property type="entry name" value="T_Tr_GTP-bd_dom"/>
</dbReference>
<dbReference type="InterPro" id="IPR000178">
    <property type="entry name" value="TF_IF2_bacterial-like"/>
</dbReference>
<dbReference type="InterPro" id="IPR015760">
    <property type="entry name" value="TIF_IF2"/>
</dbReference>
<dbReference type="InterPro" id="IPR023115">
    <property type="entry name" value="TIF_IF2_dom3"/>
</dbReference>
<dbReference type="InterPro" id="IPR036925">
    <property type="entry name" value="TIF_IF2_dom3_sf"/>
</dbReference>
<dbReference type="InterPro" id="IPR009000">
    <property type="entry name" value="Transl_B-barrel_sf"/>
</dbReference>
<dbReference type="NCBIfam" id="TIGR00487">
    <property type="entry name" value="IF-2"/>
    <property type="match status" value="1"/>
</dbReference>
<dbReference type="NCBIfam" id="TIGR00231">
    <property type="entry name" value="small_GTP"/>
    <property type="match status" value="1"/>
</dbReference>
<dbReference type="PANTHER" id="PTHR43381:SF5">
    <property type="entry name" value="TR-TYPE G DOMAIN-CONTAINING PROTEIN"/>
    <property type="match status" value="1"/>
</dbReference>
<dbReference type="PANTHER" id="PTHR43381">
    <property type="entry name" value="TRANSLATION INITIATION FACTOR IF-2-RELATED"/>
    <property type="match status" value="1"/>
</dbReference>
<dbReference type="Pfam" id="PF22042">
    <property type="entry name" value="EF-G_D2"/>
    <property type="match status" value="1"/>
</dbReference>
<dbReference type="Pfam" id="PF00009">
    <property type="entry name" value="GTP_EFTU"/>
    <property type="match status" value="1"/>
</dbReference>
<dbReference type="Pfam" id="PF03144">
    <property type="entry name" value="GTP_EFTU_D2"/>
    <property type="match status" value="1"/>
</dbReference>
<dbReference type="Pfam" id="PF11987">
    <property type="entry name" value="IF-2"/>
    <property type="match status" value="1"/>
</dbReference>
<dbReference type="Pfam" id="PF08364">
    <property type="entry name" value="IF2_assoc"/>
    <property type="match status" value="1"/>
</dbReference>
<dbReference type="Pfam" id="PF04760">
    <property type="entry name" value="IF2_N"/>
    <property type="match status" value="1"/>
</dbReference>
<dbReference type="SUPFAM" id="SSF52156">
    <property type="entry name" value="Initiation factor IF2/eIF5b, domain 3"/>
    <property type="match status" value="1"/>
</dbReference>
<dbReference type="SUPFAM" id="SSF52540">
    <property type="entry name" value="P-loop containing nucleoside triphosphate hydrolases"/>
    <property type="match status" value="1"/>
</dbReference>
<dbReference type="SUPFAM" id="SSF50447">
    <property type="entry name" value="Translation proteins"/>
    <property type="match status" value="2"/>
</dbReference>
<dbReference type="PROSITE" id="PS51722">
    <property type="entry name" value="G_TR_2"/>
    <property type="match status" value="1"/>
</dbReference>
<dbReference type="PROSITE" id="PS01176">
    <property type="entry name" value="IF2"/>
    <property type="match status" value="1"/>
</dbReference>